<feature type="chain" id="PRO_1000043693" description="GTP cyclohydrolase 1">
    <location>
        <begin position="1"/>
        <end position="188"/>
    </location>
</feature>
<feature type="binding site" evidence="2">
    <location>
        <position position="78"/>
    </location>
    <ligand>
        <name>Zn(2+)</name>
        <dbReference type="ChEBI" id="CHEBI:29105"/>
    </ligand>
</feature>
<feature type="binding site" evidence="2">
    <location>
        <position position="81"/>
    </location>
    <ligand>
        <name>Zn(2+)</name>
        <dbReference type="ChEBI" id="CHEBI:29105"/>
    </ligand>
</feature>
<feature type="binding site" evidence="2">
    <location>
        <position position="150"/>
    </location>
    <ligand>
        <name>Zn(2+)</name>
        <dbReference type="ChEBI" id="CHEBI:29105"/>
    </ligand>
</feature>
<organism>
    <name type="scientific">Geobacillus kaustophilus (strain HTA426)</name>
    <dbReference type="NCBI Taxonomy" id="235909"/>
    <lineage>
        <taxon>Bacteria</taxon>
        <taxon>Bacillati</taxon>
        <taxon>Bacillota</taxon>
        <taxon>Bacilli</taxon>
        <taxon>Bacillales</taxon>
        <taxon>Anoxybacillaceae</taxon>
        <taxon>Geobacillus</taxon>
        <taxon>Geobacillus thermoleovorans group</taxon>
    </lineage>
</organism>
<gene>
    <name evidence="2" type="primary">folE</name>
    <name type="ordered locus">GK2214</name>
</gene>
<protein>
    <recommendedName>
        <fullName evidence="2">GTP cyclohydrolase 1</fullName>
        <ecNumber evidence="2">3.5.4.16</ecNumber>
    </recommendedName>
    <alternativeName>
        <fullName evidence="2">GTP cyclohydrolase I</fullName>
        <shortName evidence="2">GTP-CH-I</shortName>
    </alternativeName>
</protein>
<evidence type="ECO:0000250" key="1"/>
<evidence type="ECO:0000255" key="2">
    <source>
        <dbReference type="HAMAP-Rule" id="MF_00223"/>
    </source>
</evidence>
<dbReference type="EC" id="3.5.4.16" evidence="2"/>
<dbReference type="EMBL" id="BA000043">
    <property type="protein sequence ID" value="BAD76499.1"/>
    <property type="molecule type" value="Genomic_DNA"/>
</dbReference>
<dbReference type="RefSeq" id="WP_011231699.1">
    <property type="nucleotide sequence ID" value="NC_006510.1"/>
</dbReference>
<dbReference type="SMR" id="Q5KXT7"/>
<dbReference type="STRING" id="235909.GK2214"/>
<dbReference type="KEGG" id="gka:GK2214"/>
<dbReference type="eggNOG" id="COG0302">
    <property type="taxonomic scope" value="Bacteria"/>
</dbReference>
<dbReference type="HOGENOM" id="CLU_049768_3_3_9"/>
<dbReference type="UniPathway" id="UPA00848">
    <property type="reaction ID" value="UER00151"/>
</dbReference>
<dbReference type="Proteomes" id="UP000001172">
    <property type="component" value="Chromosome"/>
</dbReference>
<dbReference type="GO" id="GO:0005737">
    <property type="term" value="C:cytoplasm"/>
    <property type="evidence" value="ECO:0007669"/>
    <property type="project" value="TreeGrafter"/>
</dbReference>
<dbReference type="GO" id="GO:0005525">
    <property type="term" value="F:GTP binding"/>
    <property type="evidence" value="ECO:0007669"/>
    <property type="project" value="UniProtKB-KW"/>
</dbReference>
<dbReference type="GO" id="GO:0003934">
    <property type="term" value="F:GTP cyclohydrolase I activity"/>
    <property type="evidence" value="ECO:0007669"/>
    <property type="project" value="UniProtKB-UniRule"/>
</dbReference>
<dbReference type="GO" id="GO:0008270">
    <property type="term" value="F:zinc ion binding"/>
    <property type="evidence" value="ECO:0007669"/>
    <property type="project" value="UniProtKB-UniRule"/>
</dbReference>
<dbReference type="GO" id="GO:0006730">
    <property type="term" value="P:one-carbon metabolic process"/>
    <property type="evidence" value="ECO:0007669"/>
    <property type="project" value="UniProtKB-UniRule"/>
</dbReference>
<dbReference type="GO" id="GO:0006729">
    <property type="term" value="P:tetrahydrobiopterin biosynthetic process"/>
    <property type="evidence" value="ECO:0007669"/>
    <property type="project" value="TreeGrafter"/>
</dbReference>
<dbReference type="GO" id="GO:0046654">
    <property type="term" value="P:tetrahydrofolate biosynthetic process"/>
    <property type="evidence" value="ECO:0007669"/>
    <property type="project" value="UniProtKB-UniRule"/>
</dbReference>
<dbReference type="CDD" id="cd00642">
    <property type="entry name" value="GTP_cyclohydro1"/>
    <property type="match status" value="1"/>
</dbReference>
<dbReference type="FunFam" id="1.10.286.10:FF:000001">
    <property type="entry name" value="GTP cyclohydrolase 1"/>
    <property type="match status" value="1"/>
</dbReference>
<dbReference type="FunFam" id="3.30.1130.10:FF:000001">
    <property type="entry name" value="GTP cyclohydrolase 1"/>
    <property type="match status" value="1"/>
</dbReference>
<dbReference type="Gene3D" id="1.10.286.10">
    <property type="match status" value="1"/>
</dbReference>
<dbReference type="Gene3D" id="3.30.1130.10">
    <property type="match status" value="1"/>
</dbReference>
<dbReference type="HAMAP" id="MF_00223">
    <property type="entry name" value="FolE"/>
    <property type="match status" value="1"/>
</dbReference>
<dbReference type="InterPro" id="IPR043133">
    <property type="entry name" value="GTP-CH-I_C/QueF"/>
</dbReference>
<dbReference type="InterPro" id="IPR043134">
    <property type="entry name" value="GTP-CH-I_N"/>
</dbReference>
<dbReference type="InterPro" id="IPR001474">
    <property type="entry name" value="GTP_CycHdrlase_I"/>
</dbReference>
<dbReference type="InterPro" id="IPR018234">
    <property type="entry name" value="GTP_CycHdrlase_I_CS"/>
</dbReference>
<dbReference type="InterPro" id="IPR020602">
    <property type="entry name" value="GTP_CycHdrlase_I_dom"/>
</dbReference>
<dbReference type="NCBIfam" id="TIGR00063">
    <property type="entry name" value="folE"/>
    <property type="match status" value="1"/>
</dbReference>
<dbReference type="NCBIfam" id="NF006825">
    <property type="entry name" value="PRK09347.1-2"/>
    <property type="match status" value="1"/>
</dbReference>
<dbReference type="NCBIfam" id="NF006826">
    <property type="entry name" value="PRK09347.1-3"/>
    <property type="match status" value="1"/>
</dbReference>
<dbReference type="PANTHER" id="PTHR11109:SF7">
    <property type="entry name" value="GTP CYCLOHYDROLASE 1"/>
    <property type="match status" value="1"/>
</dbReference>
<dbReference type="PANTHER" id="PTHR11109">
    <property type="entry name" value="GTP CYCLOHYDROLASE I"/>
    <property type="match status" value="1"/>
</dbReference>
<dbReference type="Pfam" id="PF01227">
    <property type="entry name" value="GTP_cyclohydroI"/>
    <property type="match status" value="1"/>
</dbReference>
<dbReference type="SUPFAM" id="SSF55620">
    <property type="entry name" value="Tetrahydrobiopterin biosynthesis enzymes-like"/>
    <property type="match status" value="1"/>
</dbReference>
<dbReference type="PROSITE" id="PS00859">
    <property type="entry name" value="GTP_CYCLOHYDROL_1_1"/>
    <property type="match status" value="1"/>
</dbReference>
<dbReference type="PROSITE" id="PS00860">
    <property type="entry name" value="GTP_CYCLOHYDROL_1_2"/>
    <property type="match status" value="1"/>
</dbReference>
<accession>Q5KXT7</accession>
<name>GCH1_GEOKA</name>
<proteinExistence type="inferred from homology"/>
<sequence length="188" mass="20868">MPEINFAQIEYAVRLILEAIGEDPNREGLVDTPKRVAKMYAEVFAGLQEDPKQHFQTVFSEEHEELVLVKDIPFYSMCEHHLVPFFGAAHVAYIPREGKVTGLSKLARAVEAVARRPQLQERITATIADSIVEALEPHGVMVVVEAEHMCMTMRGVKKPGSKTVTTAVRGVFETDANARAEVLSLIKA</sequence>
<keyword id="KW-0342">GTP-binding</keyword>
<keyword id="KW-0378">Hydrolase</keyword>
<keyword id="KW-0479">Metal-binding</keyword>
<keyword id="KW-0547">Nucleotide-binding</keyword>
<keyword id="KW-0554">One-carbon metabolism</keyword>
<keyword id="KW-1185">Reference proteome</keyword>
<keyword id="KW-0862">Zinc</keyword>
<comment type="catalytic activity">
    <reaction evidence="2">
        <text>GTP + H2O = 7,8-dihydroneopterin 3'-triphosphate + formate + H(+)</text>
        <dbReference type="Rhea" id="RHEA:17473"/>
        <dbReference type="ChEBI" id="CHEBI:15377"/>
        <dbReference type="ChEBI" id="CHEBI:15378"/>
        <dbReference type="ChEBI" id="CHEBI:15740"/>
        <dbReference type="ChEBI" id="CHEBI:37565"/>
        <dbReference type="ChEBI" id="CHEBI:58462"/>
        <dbReference type="EC" id="3.5.4.16"/>
    </reaction>
</comment>
<comment type="pathway">
    <text evidence="2">Cofactor biosynthesis; 7,8-dihydroneopterin triphosphate biosynthesis; 7,8-dihydroneopterin triphosphate from GTP: step 1/1.</text>
</comment>
<comment type="subunit">
    <text evidence="1">Toroid-shaped homodecamer, composed of two pentamers of five dimers.</text>
</comment>
<comment type="similarity">
    <text evidence="2">Belongs to the GTP cyclohydrolase I family.</text>
</comment>
<reference key="1">
    <citation type="journal article" date="2004" name="Nucleic Acids Res.">
        <title>Thermoadaptation trait revealed by the genome sequence of thermophilic Geobacillus kaustophilus.</title>
        <authorList>
            <person name="Takami H."/>
            <person name="Takaki Y."/>
            <person name="Chee G.-J."/>
            <person name="Nishi S."/>
            <person name="Shimamura S."/>
            <person name="Suzuki H."/>
            <person name="Matsui S."/>
            <person name="Uchiyama I."/>
        </authorList>
    </citation>
    <scope>NUCLEOTIDE SEQUENCE [LARGE SCALE GENOMIC DNA]</scope>
    <source>
        <strain>HTA426</strain>
    </source>
</reference>